<feature type="chain" id="PRO_0000361019" description="DNA-directed RNA polymerase subunit beta''">
    <location>
        <begin position="1"/>
        <end position="1011"/>
    </location>
</feature>
<feature type="binding site" evidence="1">
    <location>
        <position position="216"/>
    </location>
    <ligand>
        <name>Zn(2+)</name>
        <dbReference type="ChEBI" id="CHEBI:29105"/>
    </ligand>
</feature>
<feature type="binding site" evidence="1">
    <location>
        <position position="282"/>
    </location>
    <ligand>
        <name>Zn(2+)</name>
        <dbReference type="ChEBI" id="CHEBI:29105"/>
    </ligand>
</feature>
<feature type="binding site" evidence="1">
    <location>
        <position position="288"/>
    </location>
    <ligand>
        <name>Zn(2+)</name>
        <dbReference type="ChEBI" id="CHEBI:29105"/>
    </ligand>
</feature>
<feature type="binding site" evidence="1">
    <location>
        <position position="291"/>
    </location>
    <ligand>
        <name>Zn(2+)</name>
        <dbReference type="ChEBI" id="CHEBI:29105"/>
    </ligand>
</feature>
<dbReference type="EC" id="2.7.7.6" evidence="1"/>
<dbReference type="EMBL" id="CR954199">
    <property type="protein sequence ID" value="CAL36353.1"/>
    <property type="molecule type" value="Genomic_DNA"/>
</dbReference>
<dbReference type="RefSeq" id="YP_717231.1">
    <property type="nucleotide sequence ID" value="NC_008289.1"/>
</dbReference>
<dbReference type="SMR" id="Q0P3M4"/>
<dbReference type="FunCoup" id="Q0P3M4">
    <property type="interactions" value="48"/>
</dbReference>
<dbReference type="STRING" id="70448.Q0P3M4"/>
<dbReference type="GeneID" id="4238800"/>
<dbReference type="KEGG" id="ota:OstapCp28"/>
<dbReference type="eggNOG" id="ENOG502QPYA">
    <property type="taxonomic scope" value="Eukaryota"/>
</dbReference>
<dbReference type="InParanoid" id="Q0P3M4"/>
<dbReference type="Proteomes" id="UP000009170">
    <property type="component" value="Chloroplast"/>
</dbReference>
<dbReference type="GO" id="GO:0009507">
    <property type="term" value="C:chloroplast"/>
    <property type="evidence" value="ECO:0007669"/>
    <property type="project" value="UniProtKB-SubCell"/>
</dbReference>
<dbReference type="GO" id="GO:0000428">
    <property type="term" value="C:DNA-directed RNA polymerase complex"/>
    <property type="evidence" value="ECO:0007669"/>
    <property type="project" value="UniProtKB-KW"/>
</dbReference>
<dbReference type="GO" id="GO:0005739">
    <property type="term" value="C:mitochondrion"/>
    <property type="evidence" value="ECO:0007669"/>
    <property type="project" value="GOC"/>
</dbReference>
<dbReference type="GO" id="GO:0003677">
    <property type="term" value="F:DNA binding"/>
    <property type="evidence" value="ECO:0007669"/>
    <property type="project" value="UniProtKB-UniRule"/>
</dbReference>
<dbReference type="GO" id="GO:0003899">
    <property type="term" value="F:DNA-directed RNA polymerase activity"/>
    <property type="evidence" value="ECO:0007669"/>
    <property type="project" value="UniProtKB-UniRule"/>
</dbReference>
<dbReference type="GO" id="GO:0008270">
    <property type="term" value="F:zinc ion binding"/>
    <property type="evidence" value="ECO:0007669"/>
    <property type="project" value="UniProtKB-UniRule"/>
</dbReference>
<dbReference type="GO" id="GO:0006351">
    <property type="term" value="P:DNA-templated transcription"/>
    <property type="evidence" value="ECO:0007669"/>
    <property type="project" value="UniProtKB-UniRule"/>
</dbReference>
<dbReference type="CDD" id="cd02655">
    <property type="entry name" value="RNAP_beta'_C"/>
    <property type="match status" value="1"/>
</dbReference>
<dbReference type="Gene3D" id="1.10.132.30">
    <property type="match status" value="1"/>
</dbReference>
<dbReference type="Gene3D" id="1.10.150.390">
    <property type="match status" value="1"/>
</dbReference>
<dbReference type="Gene3D" id="1.10.1790.20">
    <property type="match status" value="1"/>
</dbReference>
<dbReference type="Gene3D" id="1.10.274.100">
    <property type="entry name" value="RNA polymerase Rpb1, domain 3"/>
    <property type="match status" value="1"/>
</dbReference>
<dbReference type="HAMAP" id="MF_01324">
    <property type="entry name" value="RNApol_bact_RpoC2"/>
    <property type="match status" value="1"/>
</dbReference>
<dbReference type="InterPro" id="IPR012756">
    <property type="entry name" value="DNA-dir_RpoC2_beta_pp"/>
</dbReference>
<dbReference type="InterPro" id="IPR045867">
    <property type="entry name" value="DNA-dir_RpoC_beta_prime"/>
</dbReference>
<dbReference type="InterPro" id="IPR007066">
    <property type="entry name" value="RNA_pol_Rpb1_3"/>
</dbReference>
<dbReference type="InterPro" id="IPR042102">
    <property type="entry name" value="RNA_pol_Rpb1_3_sf"/>
</dbReference>
<dbReference type="InterPro" id="IPR007083">
    <property type="entry name" value="RNA_pol_Rpb1_4"/>
</dbReference>
<dbReference type="InterPro" id="IPR007081">
    <property type="entry name" value="RNA_pol_Rpb1_5"/>
</dbReference>
<dbReference type="InterPro" id="IPR038120">
    <property type="entry name" value="Rpb1_funnel_sf"/>
</dbReference>
<dbReference type="NCBIfam" id="TIGR02388">
    <property type="entry name" value="rpoC2_cyan"/>
    <property type="match status" value="1"/>
</dbReference>
<dbReference type="PANTHER" id="PTHR19376">
    <property type="entry name" value="DNA-DIRECTED RNA POLYMERASE"/>
    <property type="match status" value="1"/>
</dbReference>
<dbReference type="PANTHER" id="PTHR19376:SF68">
    <property type="entry name" value="DNA-DIRECTED RNA POLYMERASE SUBUNIT BETA"/>
    <property type="match status" value="1"/>
</dbReference>
<dbReference type="Pfam" id="PF04983">
    <property type="entry name" value="RNA_pol_Rpb1_3"/>
    <property type="match status" value="1"/>
</dbReference>
<dbReference type="Pfam" id="PF05000">
    <property type="entry name" value="RNA_pol_Rpb1_4"/>
    <property type="match status" value="1"/>
</dbReference>
<dbReference type="Pfam" id="PF04998">
    <property type="entry name" value="RNA_pol_Rpb1_5"/>
    <property type="match status" value="2"/>
</dbReference>
<dbReference type="SUPFAM" id="SSF64484">
    <property type="entry name" value="beta and beta-prime subunits of DNA dependent RNA-polymerase"/>
    <property type="match status" value="1"/>
</dbReference>
<proteinExistence type="inferred from homology"/>
<reference key="1">
    <citation type="journal article" date="2007" name="Mol. Biol. Evol.">
        <title>The complete chloroplast and mitochondrial DNA sequence of Ostreococcus tauri: organelle genomes of the smallest eukaryote are examples of compaction.</title>
        <authorList>
            <person name="Robbens S."/>
            <person name="Derelle E."/>
            <person name="Ferraz C."/>
            <person name="Wuyts J."/>
            <person name="Moreau H."/>
            <person name="Van de Peer Y."/>
        </authorList>
    </citation>
    <scope>NUCLEOTIDE SEQUENCE [LARGE SCALE GENOMIC DNA]</scope>
    <source>
        <strain>OTTH0595</strain>
    </source>
</reference>
<geneLocation type="chloroplast"/>
<evidence type="ECO:0000255" key="1">
    <source>
        <dbReference type="HAMAP-Rule" id="MF_01324"/>
    </source>
</evidence>
<accession>Q0P3M4</accession>
<name>RPOC2_OSTTA</name>
<keyword id="KW-0150">Chloroplast</keyword>
<keyword id="KW-0240">DNA-directed RNA polymerase</keyword>
<keyword id="KW-0479">Metal-binding</keyword>
<keyword id="KW-0548">Nucleotidyltransferase</keyword>
<keyword id="KW-0934">Plastid</keyword>
<keyword id="KW-1185">Reference proteome</keyword>
<keyword id="KW-0804">Transcription</keyword>
<keyword id="KW-0808">Transferase</keyword>
<keyword id="KW-0862">Zinc</keyword>
<gene>
    <name evidence="1" type="primary">rpoC2</name>
    <name type="ordered locus">OtCpg00280</name>
</gene>
<comment type="function">
    <text evidence="1">DNA-dependent RNA polymerase catalyzes the transcription of DNA into RNA using the four ribonucleoside triphosphates as substrates.</text>
</comment>
<comment type="catalytic activity">
    <reaction evidence="1">
        <text>RNA(n) + a ribonucleoside 5'-triphosphate = RNA(n+1) + diphosphate</text>
        <dbReference type="Rhea" id="RHEA:21248"/>
        <dbReference type="Rhea" id="RHEA-COMP:14527"/>
        <dbReference type="Rhea" id="RHEA-COMP:17342"/>
        <dbReference type="ChEBI" id="CHEBI:33019"/>
        <dbReference type="ChEBI" id="CHEBI:61557"/>
        <dbReference type="ChEBI" id="CHEBI:140395"/>
        <dbReference type="EC" id="2.7.7.6"/>
    </reaction>
</comment>
<comment type="cofactor">
    <cofactor evidence="1">
        <name>Zn(2+)</name>
        <dbReference type="ChEBI" id="CHEBI:29105"/>
    </cofactor>
    <text evidence="1">Binds 1 Zn(2+) ion per subunit.</text>
</comment>
<comment type="subunit">
    <text evidence="1">In plastids the minimal PEP RNA polymerase catalytic core is composed of four subunits: alpha, beta, beta', and beta''. When a (nuclear-encoded) sigma factor is associated with the core the holoenzyme is formed, which can initiate transcription.</text>
</comment>
<comment type="subcellular location">
    <subcellularLocation>
        <location evidence="1">Plastid</location>
        <location evidence="1">Chloroplast</location>
    </subcellularLocation>
</comment>
<comment type="similarity">
    <text evidence="1">Belongs to the RNA polymerase beta' chain family. RpoC2 subfamily.</text>
</comment>
<protein>
    <recommendedName>
        <fullName evidence="1">DNA-directed RNA polymerase subunit beta''</fullName>
        <ecNumber evidence="1">2.7.7.6</ecNumber>
    </recommendedName>
    <alternativeName>
        <fullName evidence="1">PEP</fullName>
    </alternativeName>
    <alternativeName>
        <fullName evidence="1">Plastid-encoded RNA polymerase subunit beta''</fullName>
        <shortName evidence="1">RNA polymerase subunit beta''</shortName>
    </alternativeName>
</protein>
<organism>
    <name type="scientific">Ostreococcus tauri</name>
    <dbReference type="NCBI Taxonomy" id="70448"/>
    <lineage>
        <taxon>Eukaryota</taxon>
        <taxon>Viridiplantae</taxon>
        <taxon>Chlorophyta</taxon>
        <taxon>Mamiellophyceae</taxon>
        <taxon>Mamiellales</taxon>
        <taxon>Bathycoccaceae</taxon>
        <taxon>Ostreococcus</taxon>
    </lineage>
</organism>
<sequence>MKTFFCNRTVDKGEMKRLIKWVLLNYGTEKTTRLIDKLKTMGFHYATHAGISLGIDDLSIPPIKSAFLLNAENDIYENDLRLKRGQITSVQRLEKALDIWNTTNDTLKTEVVKYFRSTDIFNPVYMMAFSGARGNISQVRQLVGMRGLMADPQGQILDFPIRRNFREGLTVTEYMISCYGARKGLVDTALRTASSGYLTRRLVDVAQSVIIQQVDCQTTQGLRIVPELEKIESQLIGRVLFEDVVDLETGRMVGYKNQDISPALALKLIKQPALTIRSPLTCRFHAVCQLCYGWNLAQQKLVQLGEAVGVLAAQSIGEPGTQLTMRTFHTGGVFAGEATEKVYSPHNGIVFYSKQARGRKIVSKYGEVAFLTFEPLKVKIKNDNTTSVLEFPSFTLLYIPPGQTVGEHQSLAELSRIENKQNFQQFEVGTENVQKEFMSNCSGQIFLPQRQNALINEDNAGTTTFNYSEMWLLAGKILDSKTLVPGDQIKNALYPIRSKINCEPSRLTTTLPLGYVFPIDSNQTSLSKLQSTDAETLKQLPLLQFSKLSADNLKFARSYALELNKTLFHCDSLSKYRFITSDLEHLPFKSKNLFFNQDTPTKKVPTFKIKFSRFGKADKFNAKEKFLLLRSVTKLVSTQTNPLKTQFANNLFVQNSINKNKKTFLEVVKPLKTFQKKTNFFPSPTHENIKSFNPSLQNGNLMSVDADYVRLNVQYGKGFSSLLNCGEVRATNCMMTEKDQIAFKSPVCDLKMKVGDYARVEDQLTTSTRIPLSGQINFITAENVLFRSVQPYLLVPGSNVVVKHGSLVQENSVLGTLMTSQSTAGDIVQGLPKVDELLEAREPQHKVLTSMHAKLSTLFSQYGKIYGLREGCELSFQKIRQFLVQEVQDVYQSQGVYIGDKHVEIIVRQMTTHVVVVDAGKTGLLPGDIVDIRRIEQLEHTGFFAGVKYRPMLLGITRAALMAESFISAASFQETKRVLSKAALEGQIDWLTGLKENVILGRLIPAGTGLY</sequence>